<dbReference type="EMBL" id="AE014297">
    <property type="protein sequence ID" value="AAF55429.2"/>
    <property type="molecule type" value="Genomic_DNA"/>
</dbReference>
<dbReference type="EMBL" id="AY119589">
    <property type="protein sequence ID" value="AAM50243.1"/>
    <property type="molecule type" value="mRNA"/>
</dbReference>
<dbReference type="RefSeq" id="NP_001303435.1">
    <property type="nucleotide sequence ID" value="NM_001316506.1"/>
</dbReference>
<dbReference type="RefSeq" id="NP_652040.2">
    <property type="nucleotide sequence ID" value="NM_143783.3"/>
</dbReference>
<dbReference type="BioGRID" id="70125">
    <property type="interactions" value="5"/>
</dbReference>
<dbReference type="FunCoup" id="Q9VEJ2">
    <property type="interactions" value="1934"/>
</dbReference>
<dbReference type="IntAct" id="Q9VEJ2">
    <property type="interactions" value="8"/>
</dbReference>
<dbReference type="STRING" id="7227.FBpp0312516"/>
<dbReference type="PaxDb" id="7227-FBpp0082928"/>
<dbReference type="EnsemblMetazoa" id="FBtr0083504">
    <property type="protein sequence ID" value="FBpp0082928"/>
    <property type="gene ID" value="FBgn0010926"/>
</dbReference>
<dbReference type="EnsemblMetazoa" id="FBtr0347218">
    <property type="protein sequence ID" value="FBpp0312516"/>
    <property type="gene ID" value="FBgn0010926"/>
</dbReference>
<dbReference type="GeneID" id="46201"/>
<dbReference type="KEGG" id="dme:Dmel_CG5824"/>
<dbReference type="AGR" id="FB:FBgn0010926"/>
<dbReference type="FlyBase" id="FBgn0010926">
    <property type="gene designation" value="l(3)07882"/>
</dbReference>
<dbReference type="VEuPathDB" id="VectorBase:FBgn0010926"/>
<dbReference type="eggNOG" id="KOG2147">
    <property type="taxonomic scope" value="Eukaryota"/>
</dbReference>
<dbReference type="GeneTree" id="ENSGT00390000017459"/>
<dbReference type="HOGENOM" id="CLU_008874_1_0_1"/>
<dbReference type="InParanoid" id="Q9VEJ2"/>
<dbReference type="OMA" id="KSCWPSL"/>
<dbReference type="OrthoDB" id="441771at2759"/>
<dbReference type="PhylomeDB" id="Q9VEJ2"/>
<dbReference type="Reactome" id="R-DME-6791226">
    <property type="pathway name" value="Major pathway of rRNA processing in the nucleolus and cytosol"/>
</dbReference>
<dbReference type="BioGRID-ORCS" id="46201">
    <property type="hits" value="0 hits in 1 CRISPR screen"/>
</dbReference>
<dbReference type="GenomeRNAi" id="46201"/>
<dbReference type="PRO" id="PR:Q9VEJ2"/>
<dbReference type="Proteomes" id="UP000000803">
    <property type="component" value="Chromosome 3R"/>
</dbReference>
<dbReference type="Bgee" id="FBgn0010926">
    <property type="expression patterns" value="Expressed in fat body cell in open tracheal system trachea and 113 other cell types or tissues"/>
</dbReference>
<dbReference type="ExpressionAtlas" id="Q9VEJ2">
    <property type="expression patterns" value="baseline and differential"/>
</dbReference>
<dbReference type="GO" id="GO:0030692">
    <property type="term" value="C:Noc4p-Nop14p complex"/>
    <property type="evidence" value="ECO:0000318"/>
    <property type="project" value="GO_Central"/>
</dbReference>
<dbReference type="GO" id="GO:0005730">
    <property type="term" value="C:nucleolus"/>
    <property type="evidence" value="ECO:0000250"/>
    <property type="project" value="UniProtKB"/>
</dbReference>
<dbReference type="GO" id="GO:0032040">
    <property type="term" value="C:small-subunit processome"/>
    <property type="evidence" value="ECO:0000318"/>
    <property type="project" value="GO_Central"/>
</dbReference>
<dbReference type="GO" id="GO:0030515">
    <property type="term" value="F:snoRNA binding"/>
    <property type="evidence" value="ECO:0000250"/>
    <property type="project" value="UniProtKB"/>
</dbReference>
<dbReference type="GO" id="GO:0030490">
    <property type="term" value="P:maturation of SSU-rRNA"/>
    <property type="evidence" value="ECO:0000318"/>
    <property type="project" value="GO_Central"/>
</dbReference>
<dbReference type="GO" id="GO:0042274">
    <property type="term" value="P:ribosomal small subunit biogenesis"/>
    <property type="evidence" value="ECO:0000250"/>
    <property type="project" value="UniProtKB"/>
</dbReference>
<dbReference type="GO" id="GO:0006364">
    <property type="term" value="P:rRNA processing"/>
    <property type="evidence" value="ECO:0000250"/>
    <property type="project" value="UniProtKB"/>
</dbReference>
<dbReference type="InterPro" id="IPR007276">
    <property type="entry name" value="Nop14"/>
</dbReference>
<dbReference type="PANTHER" id="PTHR23183">
    <property type="entry name" value="NOP14"/>
    <property type="match status" value="1"/>
</dbReference>
<dbReference type="PANTHER" id="PTHR23183:SF0">
    <property type="entry name" value="NUCLEOLAR PROTEIN 14"/>
    <property type="match status" value="1"/>
</dbReference>
<dbReference type="Pfam" id="PF04147">
    <property type="entry name" value="Nop14"/>
    <property type="match status" value="1"/>
</dbReference>
<sequence length="852" mass="97552">MVAKGKKASADAVYAKKTTRSANPFDNSTAQSSKRGNPFDVHVNKEKFKILGRICKHDRGMPGVSRAKALQKRAQTLGQQFAVKHKTNRFKDNRIGKHLSGDQLTESVMNARYLAEKMSQVRSNQKAEKFNLNDDELLTHRGQTLEEIEQYRDERSDDEELDDEALDADFTAAAHFGGEGDSAQDRQAAIDEMIVEQKRRKNEIAKEKDEVYDLTEKLDANYKLLLPLVAKVTKDEQDAKPPPDAYDKLLKEMIFEPRGSVADKLINPDELAKQEAARLEKLENERLRRMRADGEEDEEASVAKPKHRSADDLDDGYFLAGEDDEGDDTLAYDLDGNLGTHLNGKKEAVLKGDENEDDDDKEGEEEEEEDSDEESDSEVDNLSDLKESESESEPEEAPKASKKKAKKSADTIPASLDTSIPFTIKMPKTYEDFTELLSKHATAQKAIIIERIIKCNHPKLEGVNRENVVKLYSFLLQYLKDLFEDASEQDIREHFQLLSKLMPYLYELTQLNPERMSNTLLEVIKEKYEEFRKNHKMYPSLDTLVYFKLVANLYSTSDFRHPVVTPCFIFIQHVLSRSRVRTRQEISMGLFLVTVVLEFVSQSKRLVPAVFNFLQGIVHMSIPKRDVEQLEITPPFERDGPLSKLLALPANTESTKLEPQQLQPTDLVTQTITPDFKVRALDTSLLLIKEALQLVEEHVGACYLAQPFLALLSRLPLESYPEHVHQHHKDATELAEKLAAQKMKPLAPAEKKPKALRLLEPRFEAVYDDKRRPKMSKAKEERAKLLHKIKREKKGAIREIRRDTSFVQMLRLKQTLQSDKERHEKVKRIYQEASVQQGELNELSRAKKKKKF</sequence>
<evidence type="ECO:0000250" key="1"/>
<evidence type="ECO:0000255" key="2"/>
<evidence type="ECO:0000256" key="3">
    <source>
        <dbReference type="SAM" id="MobiDB-lite"/>
    </source>
</evidence>
<evidence type="ECO:0000305" key="4"/>
<name>NOP14_DROME</name>
<comment type="function">
    <text evidence="1">Involved in nucleolar processing of pre-18S ribosomal RNA. Has a role in the nuclear export of 40S pre-ribosomal subunit to the cytoplasm (By similarity).</text>
</comment>
<comment type="subunit">
    <text evidence="1">Component of the ribosomal small subunit (SSU) processome.</text>
</comment>
<comment type="subcellular location">
    <subcellularLocation>
        <location evidence="1">Nucleus</location>
        <location evidence="1">Nucleolus</location>
    </subcellularLocation>
</comment>
<comment type="similarity">
    <text evidence="4">Belongs to the NOP14 family.</text>
</comment>
<organism>
    <name type="scientific">Drosophila melanogaster</name>
    <name type="common">Fruit fly</name>
    <dbReference type="NCBI Taxonomy" id="7227"/>
    <lineage>
        <taxon>Eukaryota</taxon>
        <taxon>Metazoa</taxon>
        <taxon>Ecdysozoa</taxon>
        <taxon>Arthropoda</taxon>
        <taxon>Hexapoda</taxon>
        <taxon>Insecta</taxon>
        <taxon>Pterygota</taxon>
        <taxon>Neoptera</taxon>
        <taxon>Endopterygota</taxon>
        <taxon>Diptera</taxon>
        <taxon>Brachycera</taxon>
        <taxon>Muscomorpha</taxon>
        <taxon>Ephydroidea</taxon>
        <taxon>Drosophilidae</taxon>
        <taxon>Drosophila</taxon>
        <taxon>Sophophora</taxon>
    </lineage>
</organism>
<feature type="chain" id="PRO_0000252175" description="Nucleolar protein 14 homolog">
    <location>
        <begin position="1"/>
        <end position="852"/>
    </location>
</feature>
<feature type="region of interest" description="Disordered" evidence="3">
    <location>
        <begin position="1"/>
        <end position="40"/>
    </location>
</feature>
<feature type="region of interest" description="Disordered" evidence="3">
    <location>
        <begin position="288"/>
        <end position="324"/>
    </location>
</feature>
<feature type="region of interest" description="Disordered" evidence="3">
    <location>
        <begin position="338"/>
        <end position="410"/>
    </location>
</feature>
<feature type="coiled-coil region" evidence="2">
    <location>
        <begin position="190"/>
        <end position="221"/>
    </location>
</feature>
<feature type="coiled-coil region" evidence="2">
    <location>
        <begin position="774"/>
        <end position="851"/>
    </location>
</feature>
<feature type="compositionally biased region" description="Polar residues" evidence="3">
    <location>
        <begin position="20"/>
        <end position="35"/>
    </location>
</feature>
<feature type="compositionally biased region" description="Basic and acidic residues" evidence="3">
    <location>
        <begin position="344"/>
        <end position="353"/>
    </location>
</feature>
<feature type="compositionally biased region" description="Acidic residues" evidence="3">
    <location>
        <begin position="354"/>
        <end position="381"/>
    </location>
</feature>
<accession>Q9VEJ2</accession>
<reference key="1">
    <citation type="journal article" date="2000" name="Science">
        <title>The genome sequence of Drosophila melanogaster.</title>
        <authorList>
            <person name="Adams M.D."/>
            <person name="Celniker S.E."/>
            <person name="Holt R.A."/>
            <person name="Evans C.A."/>
            <person name="Gocayne J.D."/>
            <person name="Amanatides P.G."/>
            <person name="Scherer S.E."/>
            <person name="Li P.W."/>
            <person name="Hoskins R.A."/>
            <person name="Galle R.F."/>
            <person name="George R.A."/>
            <person name="Lewis S.E."/>
            <person name="Richards S."/>
            <person name="Ashburner M."/>
            <person name="Henderson S.N."/>
            <person name="Sutton G.G."/>
            <person name="Wortman J.R."/>
            <person name="Yandell M.D."/>
            <person name="Zhang Q."/>
            <person name="Chen L.X."/>
            <person name="Brandon R.C."/>
            <person name="Rogers Y.-H.C."/>
            <person name="Blazej R.G."/>
            <person name="Champe M."/>
            <person name="Pfeiffer B.D."/>
            <person name="Wan K.H."/>
            <person name="Doyle C."/>
            <person name="Baxter E.G."/>
            <person name="Helt G."/>
            <person name="Nelson C.R."/>
            <person name="Miklos G.L.G."/>
            <person name="Abril J.F."/>
            <person name="Agbayani A."/>
            <person name="An H.-J."/>
            <person name="Andrews-Pfannkoch C."/>
            <person name="Baldwin D."/>
            <person name="Ballew R.M."/>
            <person name="Basu A."/>
            <person name="Baxendale J."/>
            <person name="Bayraktaroglu L."/>
            <person name="Beasley E.M."/>
            <person name="Beeson K.Y."/>
            <person name="Benos P.V."/>
            <person name="Berman B.P."/>
            <person name="Bhandari D."/>
            <person name="Bolshakov S."/>
            <person name="Borkova D."/>
            <person name="Botchan M.R."/>
            <person name="Bouck J."/>
            <person name="Brokstein P."/>
            <person name="Brottier P."/>
            <person name="Burtis K.C."/>
            <person name="Busam D.A."/>
            <person name="Butler H."/>
            <person name="Cadieu E."/>
            <person name="Center A."/>
            <person name="Chandra I."/>
            <person name="Cherry J.M."/>
            <person name="Cawley S."/>
            <person name="Dahlke C."/>
            <person name="Davenport L.B."/>
            <person name="Davies P."/>
            <person name="de Pablos B."/>
            <person name="Delcher A."/>
            <person name="Deng Z."/>
            <person name="Mays A.D."/>
            <person name="Dew I."/>
            <person name="Dietz S.M."/>
            <person name="Dodson K."/>
            <person name="Doup L.E."/>
            <person name="Downes M."/>
            <person name="Dugan-Rocha S."/>
            <person name="Dunkov B.C."/>
            <person name="Dunn P."/>
            <person name="Durbin K.J."/>
            <person name="Evangelista C.C."/>
            <person name="Ferraz C."/>
            <person name="Ferriera S."/>
            <person name="Fleischmann W."/>
            <person name="Fosler C."/>
            <person name="Gabrielian A.E."/>
            <person name="Garg N.S."/>
            <person name="Gelbart W.M."/>
            <person name="Glasser K."/>
            <person name="Glodek A."/>
            <person name="Gong F."/>
            <person name="Gorrell J.H."/>
            <person name="Gu Z."/>
            <person name="Guan P."/>
            <person name="Harris M."/>
            <person name="Harris N.L."/>
            <person name="Harvey D.A."/>
            <person name="Heiman T.J."/>
            <person name="Hernandez J.R."/>
            <person name="Houck J."/>
            <person name="Hostin D."/>
            <person name="Houston K.A."/>
            <person name="Howland T.J."/>
            <person name="Wei M.-H."/>
            <person name="Ibegwam C."/>
            <person name="Jalali M."/>
            <person name="Kalush F."/>
            <person name="Karpen G.H."/>
            <person name="Ke Z."/>
            <person name="Kennison J.A."/>
            <person name="Ketchum K.A."/>
            <person name="Kimmel B.E."/>
            <person name="Kodira C.D."/>
            <person name="Kraft C.L."/>
            <person name="Kravitz S."/>
            <person name="Kulp D."/>
            <person name="Lai Z."/>
            <person name="Lasko P."/>
            <person name="Lei Y."/>
            <person name="Levitsky A.A."/>
            <person name="Li J.H."/>
            <person name="Li Z."/>
            <person name="Liang Y."/>
            <person name="Lin X."/>
            <person name="Liu X."/>
            <person name="Mattei B."/>
            <person name="McIntosh T.C."/>
            <person name="McLeod M.P."/>
            <person name="McPherson D."/>
            <person name="Merkulov G."/>
            <person name="Milshina N.V."/>
            <person name="Mobarry C."/>
            <person name="Morris J."/>
            <person name="Moshrefi A."/>
            <person name="Mount S.M."/>
            <person name="Moy M."/>
            <person name="Murphy B."/>
            <person name="Murphy L."/>
            <person name="Muzny D.M."/>
            <person name="Nelson D.L."/>
            <person name="Nelson D.R."/>
            <person name="Nelson K.A."/>
            <person name="Nixon K."/>
            <person name="Nusskern D.R."/>
            <person name="Pacleb J.M."/>
            <person name="Palazzolo M."/>
            <person name="Pittman G.S."/>
            <person name="Pan S."/>
            <person name="Pollard J."/>
            <person name="Puri V."/>
            <person name="Reese M.G."/>
            <person name="Reinert K."/>
            <person name="Remington K."/>
            <person name="Saunders R.D.C."/>
            <person name="Scheeler F."/>
            <person name="Shen H."/>
            <person name="Shue B.C."/>
            <person name="Siden-Kiamos I."/>
            <person name="Simpson M."/>
            <person name="Skupski M.P."/>
            <person name="Smith T.J."/>
            <person name="Spier E."/>
            <person name="Spradling A.C."/>
            <person name="Stapleton M."/>
            <person name="Strong R."/>
            <person name="Sun E."/>
            <person name="Svirskas R."/>
            <person name="Tector C."/>
            <person name="Turner R."/>
            <person name="Venter E."/>
            <person name="Wang A.H."/>
            <person name="Wang X."/>
            <person name="Wang Z.-Y."/>
            <person name="Wassarman D.A."/>
            <person name="Weinstock G.M."/>
            <person name="Weissenbach J."/>
            <person name="Williams S.M."/>
            <person name="Woodage T."/>
            <person name="Worley K.C."/>
            <person name="Wu D."/>
            <person name="Yang S."/>
            <person name="Yao Q.A."/>
            <person name="Ye J."/>
            <person name="Yeh R.-F."/>
            <person name="Zaveri J.S."/>
            <person name="Zhan M."/>
            <person name="Zhang G."/>
            <person name="Zhao Q."/>
            <person name="Zheng L."/>
            <person name="Zheng X.H."/>
            <person name="Zhong F.N."/>
            <person name="Zhong W."/>
            <person name="Zhou X."/>
            <person name="Zhu S.C."/>
            <person name="Zhu X."/>
            <person name="Smith H.O."/>
            <person name="Gibbs R.A."/>
            <person name="Myers E.W."/>
            <person name="Rubin G.M."/>
            <person name="Venter J.C."/>
        </authorList>
    </citation>
    <scope>NUCLEOTIDE SEQUENCE [LARGE SCALE GENOMIC DNA]</scope>
    <source>
        <strain>Berkeley</strain>
    </source>
</reference>
<reference key="2">
    <citation type="journal article" date="2002" name="Genome Biol.">
        <title>Annotation of the Drosophila melanogaster euchromatic genome: a systematic review.</title>
        <authorList>
            <person name="Misra S."/>
            <person name="Crosby M.A."/>
            <person name="Mungall C.J."/>
            <person name="Matthews B.B."/>
            <person name="Campbell K.S."/>
            <person name="Hradecky P."/>
            <person name="Huang Y."/>
            <person name="Kaminker J.S."/>
            <person name="Millburn G.H."/>
            <person name="Prochnik S.E."/>
            <person name="Smith C.D."/>
            <person name="Tupy J.L."/>
            <person name="Whitfield E.J."/>
            <person name="Bayraktaroglu L."/>
            <person name="Berman B.P."/>
            <person name="Bettencourt B.R."/>
            <person name="Celniker S.E."/>
            <person name="de Grey A.D.N.J."/>
            <person name="Drysdale R.A."/>
            <person name="Harris N.L."/>
            <person name="Richter J."/>
            <person name="Russo S."/>
            <person name="Schroeder A.J."/>
            <person name="Shu S.Q."/>
            <person name="Stapleton M."/>
            <person name="Yamada C."/>
            <person name="Ashburner M."/>
            <person name="Gelbart W.M."/>
            <person name="Rubin G.M."/>
            <person name="Lewis S.E."/>
        </authorList>
    </citation>
    <scope>GENOME REANNOTATION</scope>
    <source>
        <strain>Berkeley</strain>
    </source>
</reference>
<reference key="3">
    <citation type="journal article" date="2002" name="Genome Biol.">
        <title>A Drosophila full-length cDNA resource.</title>
        <authorList>
            <person name="Stapleton M."/>
            <person name="Carlson J.W."/>
            <person name="Brokstein P."/>
            <person name="Yu C."/>
            <person name="Champe M."/>
            <person name="George R.A."/>
            <person name="Guarin H."/>
            <person name="Kronmiller B."/>
            <person name="Pacleb J.M."/>
            <person name="Park S."/>
            <person name="Wan K.H."/>
            <person name="Rubin G.M."/>
            <person name="Celniker S.E."/>
        </authorList>
    </citation>
    <scope>NUCLEOTIDE SEQUENCE [LARGE SCALE MRNA]</scope>
    <source>
        <strain>Berkeley</strain>
        <tissue>Embryo</tissue>
    </source>
</reference>
<proteinExistence type="evidence at transcript level"/>
<protein>
    <recommendedName>
        <fullName>Nucleolar protein 14 homolog</fullName>
    </recommendedName>
    <alternativeName>
        <fullName>Nucleolar complex protein 14 homolog</fullName>
    </alternativeName>
</protein>
<keyword id="KW-0175">Coiled coil</keyword>
<keyword id="KW-0539">Nucleus</keyword>
<keyword id="KW-1185">Reference proteome</keyword>
<keyword id="KW-0690">Ribosome biogenesis</keyword>
<keyword id="KW-0698">rRNA processing</keyword>
<gene>
    <name type="primary">l(3)07882</name>
    <name type="ORF">CG5824</name>
</gene>